<evidence type="ECO:0000255" key="1"/>
<evidence type="ECO:0000269" key="2">
    <source>
    </source>
</evidence>
<evidence type="ECO:0000269" key="3">
    <source>
    </source>
</evidence>
<evidence type="ECO:0000269" key="4">
    <source>
    </source>
</evidence>
<evidence type="ECO:0000269" key="5">
    <source>
    </source>
</evidence>
<evidence type="ECO:0000303" key="6">
    <source>
    </source>
</evidence>
<evidence type="ECO:0000303" key="7">
    <source>
    </source>
</evidence>
<evidence type="ECO:0000303" key="8">
    <source>
    </source>
</evidence>
<evidence type="ECO:0000303" key="9">
    <source ref="4"/>
</evidence>
<evidence type="ECO:0000305" key="10"/>
<evidence type="ECO:0000312" key="11">
    <source>
        <dbReference type="EMBL" id="AAH12766.1"/>
    </source>
</evidence>
<evidence type="ECO:0000312" key="12">
    <source>
        <dbReference type="EMBL" id="AAH14490.1"/>
    </source>
</evidence>
<evidence type="ECO:0000312" key="13">
    <source>
        <dbReference type="EMBL" id="BAA86495.1"/>
    </source>
</evidence>
<feature type="chain" id="PRO_0000087023" description="Endoplasmic reticulum-Golgi intermediate compartment protein 1">
    <location>
        <begin position="1"/>
        <end position="290"/>
    </location>
</feature>
<feature type="topological domain" description="Cytoplasmic" evidence="1">
    <location>
        <begin position="1"/>
        <end position="26"/>
    </location>
</feature>
<feature type="transmembrane region" description="Helical" evidence="1">
    <location>
        <begin position="27"/>
        <end position="47"/>
    </location>
</feature>
<feature type="topological domain" description="Lumenal" evidence="1">
    <location>
        <begin position="48"/>
        <end position="254"/>
    </location>
</feature>
<feature type="transmembrane region" description="Helical" evidence="1">
    <location>
        <begin position="255"/>
        <end position="275"/>
    </location>
</feature>
<feature type="topological domain" description="Cytoplasmic" evidence="1">
    <location>
        <begin position="276"/>
        <end position="290"/>
    </location>
</feature>
<feature type="glycosylation site" description="N-linked (GlcNAc...) asparagine" evidence="2 3">
    <location>
        <position position="74"/>
    </location>
</feature>
<feature type="splice variant" id="VSP_011560" description="In isoform 2." evidence="6">
    <location>
        <begin position="1"/>
        <end position="92"/>
    </location>
</feature>
<feature type="splice variant" id="VSP_011561" description="In isoform 3." evidence="7 9">
    <location>
        <begin position="1"/>
        <end position="45"/>
    </location>
</feature>
<feature type="splice variant" id="VSP_011562" description="In isoform 3." evidence="7 9">
    <original>GFITTEV</original>
    <variation>MERWAMR</variation>
    <location>
        <begin position="46"/>
        <end position="52"/>
    </location>
</feature>
<feature type="splice variant" id="VSP_011563" description="In isoform 3." evidence="7 9">
    <original>PGNFHVSTHSATAQPQNPDMTHVIHKLSFGDTLQVQNIHGAFNALGGADRLTSNPLASHDYILKIVPTVYEDKSGKQR</original>
    <variation>WKPCLSPFYLLPFPAVSPLPGNWLWRHSLDLTLTQPPASEGSCPAAWPFLLRIWMGVQAPWGFKPLMAGSGRSYSSLQ</variation>
    <location>
        <begin position="127"/>
        <end position="204"/>
    </location>
</feature>
<feature type="splice variant" id="VSP_011564" description="In isoform 3." evidence="7 9">
    <location>
        <begin position="205"/>
        <end position="290"/>
    </location>
</feature>
<feature type="sequence variant" id="VAR_080480" description="In AMC2; uncertain significance; dbSNP:rs1554112524." evidence="4">
    <original>V</original>
    <variation>E</variation>
    <location>
        <position position="98"/>
    </location>
</feature>
<sequence>MPFDFRRFDIYRKVPKDLTQPTYTGAIISICCCLFILFLFLSELTGFITTEVVNELYVDDPDKDSGGKIDVSLNISLPNLHCELVGLDIQDEMGRHEVGHIDNSMKIPLNNGAGCRFEGQFSINKVPGNFHVSTHSATAQPQNPDMTHVIHKLSFGDTLQVQNIHGAFNALGGADRLTSNPLASHDYILKIVPTVYEDKSGKQRYSYQYTVANKEYVAYSHTGRIIPAIWFRYDLSPITVKYTERRQPLYRFITTICAIIGGTFTVAGILDSCIFTASEAWKKIQLGKMH</sequence>
<gene>
    <name type="primary">ERGIC1</name>
    <name type="synonym">ERGIC32</name>
    <name evidence="13" type="synonym">KIAA1181</name>
    <name type="ORF">HT034</name>
</gene>
<accession>Q969X5</accession>
<accession>Q9H0L0</accession>
<accession>Q9H2J2</accession>
<accession>Q9ULN9</accession>
<organism>
    <name type="scientific">Homo sapiens</name>
    <name type="common">Human</name>
    <dbReference type="NCBI Taxonomy" id="9606"/>
    <lineage>
        <taxon>Eukaryota</taxon>
        <taxon>Metazoa</taxon>
        <taxon>Chordata</taxon>
        <taxon>Craniata</taxon>
        <taxon>Vertebrata</taxon>
        <taxon>Euteleostomi</taxon>
        <taxon>Mammalia</taxon>
        <taxon>Eutheria</taxon>
        <taxon>Euarchontoglires</taxon>
        <taxon>Primates</taxon>
        <taxon>Haplorrhini</taxon>
        <taxon>Catarrhini</taxon>
        <taxon>Hominidae</taxon>
        <taxon>Homo</taxon>
    </lineage>
</organism>
<proteinExistence type="evidence at protein level"/>
<protein>
    <recommendedName>
        <fullName>Endoplasmic reticulum-Golgi intermediate compartment protein 1</fullName>
    </recommendedName>
    <alternativeName>
        <fullName>ER-Golgi intermediate compartment 32 kDa protein</fullName>
        <shortName>ERGIC-32</shortName>
    </alternativeName>
</protein>
<name>ERGI1_HUMAN</name>
<comment type="function">
    <text evidence="8">Possible role in transport between endoplasmic reticulum and Golgi.</text>
</comment>
<comment type="subunit">
    <text evidence="2 5">May form a heteromeric complex composed of ERGIC1, ERGIC2 and ERGIC3 (PubMed:31142615). Within the complex, the interaction with ERGIC3 is direct (PubMed:31142615). Interacts with ERGIC3/ERV46 (PubMed:15308636).</text>
</comment>
<comment type="interaction">
    <interactant intactId="EBI-781527">
        <id>Q969X5</id>
    </interactant>
    <interactant intactId="EBI-2339219">
        <id>Q08426</id>
        <label>EHHADH</label>
    </interactant>
    <organismsDiffer>false</organismsDiffer>
    <experiments>3</experiments>
</comment>
<comment type="interaction">
    <interactant intactId="EBI-781527">
        <id>Q969X5</id>
    </interactant>
    <interactant intactId="EBI-781551">
        <id>Q9Y282</id>
        <label>ERGIC3</label>
    </interactant>
    <organismsDiffer>false</organismsDiffer>
    <experiments>4</experiments>
</comment>
<comment type="interaction">
    <interactant intactId="EBI-781527">
        <id>Q969X5</id>
    </interactant>
    <interactant intactId="EBI-948266">
        <id>O14901</id>
        <label>KLF11</label>
    </interactant>
    <organismsDiffer>false</organismsDiffer>
    <experiments>3</experiments>
</comment>
<comment type="interaction">
    <interactant intactId="EBI-781527">
        <id>Q969X5</id>
    </interactant>
    <interactant intactId="EBI-2811583">
        <id>Q9BVL2</id>
        <label>NUP58</label>
    </interactant>
    <organismsDiffer>false</organismsDiffer>
    <experiments>3</experiments>
</comment>
<comment type="subcellular location">
    <subcellularLocation>
        <location evidence="2">Endoplasmic reticulum membrane</location>
        <topology evidence="2">Multi-pass membrane protein</topology>
    </subcellularLocation>
    <subcellularLocation>
        <location evidence="2">Endoplasmic reticulum-Golgi intermediate compartment membrane</location>
        <topology evidence="2">Multi-pass membrane protein</topology>
    </subcellularLocation>
    <subcellularLocation>
        <location evidence="2">Golgi apparatus membrane</location>
        <topology evidence="2">Multi-pass membrane protein</topology>
    </subcellularLocation>
    <text>Cycles between the endoplasmic reticulum and the Golgi.</text>
</comment>
<comment type="alternative products">
    <event type="alternative splicing"/>
    <isoform>
        <id>Q969X5-1</id>
        <name>1</name>
        <sequence type="displayed"/>
    </isoform>
    <isoform>
        <id>Q969X5-2</id>
        <name>2</name>
        <sequence type="described" ref="VSP_011560"/>
    </isoform>
    <isoform>
        <id>Q969X5-3</id>
        <name>3</name>
        <sequence type="described" ref="VSP_011561 VSP_011562 VSP_011563 VSP_011564"/>
    </isoform>
</comment>
<comment type="PTM">
    <text evidence="2 3">N-glycosylated.</text>
</comment>
<comment type="disease" evidence="4">
    <disease id="DI-05199">
        <name>Arthrogryposis multiplex congenita 2, neurogenic type</name>
        <acronym>AMC2</acronym>
        <description>A form of arthrogryposis multiplex congenita, a heterogeneous group of disorders characterized by multiple joint contractures resulting, in some cases, from reduced or absent fetal movements. AMC2 is due to a neurogenic defect and is characterized by congenital immobility of the limbs with fixation of multiple joints, and muscle wasting. AMC2 transmission pattern is consistent with autosomal recessive inheritance in several families. Penetrance may be incomplete in females.</description>
        <dbReference type="MIM" id="208100"/>
    </disease>
    <text>The disease is caused by variants affecting the gene represented in this entry.</text>
</comment>
<comment type="similarity">
    <text evidence="10">Belongs to the ERGIC family.</text>
</comment>
<comment type="sequence caution" evidence="10">
    <conflict type="frameshift">
        <sequence resource="EMBL-CDS" id="AAG44724"/>
    </conflict>
</comment>
<comment type="sequence caution" evidence="10">
    <conflict type="erroneous initiation">
        <sequence resource="EMBL-CDS" id="BAA86495"/>
    </conflict>
    <text>Extended N-terminus.</text>
</comment>
<dbReference type="EMBL" id="AB033007">
    <property type="protein sequence ID" value="BAA86495.1"/>
    <property type="status" value="ALT_INIT"/>
    <property type="molecule type" value="mRNA"/>
</dbReference>
<dbReference type="EMBL" id="AF267855">
    <property type="protein sequence ID" value="AAG44724.1"/>
    <property type="status" value="ALT_FRAME"/>
    <property type="molecule type" value="mRNA"/>
</dbReference>
<dbReference type="EMBL" id="AL136753">
    <property type="protein sequence ID" value="CAB66687.1"/>
    <property type="molecule type" value="mRNA"/>
</dbReference>
<dbReference type="EMBL" id="CR533474">
    <property type="protein sequence ID" value="CAG38505.1"/>
    <property type="molecule type" value="mRNA"/>
</dbReference>
<dbReference type="EMBL" id="BC012766">
    <property type="protein sequence ID" value="AAH12766.1"/>
    <property type="molecule type" value="mRNA"/>
</dbReference>
<dbReference type="EMBL" id="BC014490">
    <property type="protein sequence ID" value="AAH14490.1"/>
    <property type="molecule type" value="mRNA"/>
</dbReference>
<dbReference type="CCDS" id="CCDS34292.1">
    <molecule id="Q969X5-1"/>
</dbReference>
<dbReference type="RefSeq" id="NP_001026881.1">
    <molecule id="Q969X5-1"/>
    <property type="nucleotide sequence ID" value="NM_001031711.3"/>
</dbReference>
<dbReference type="RefSeq" id="XP_006714955.1">
    <property type="nucleotide sequence ID" value="XM_006714892.1"/>
</dbReference>
<dbReference type="RefSeq" id="XP_047273367.1">
    <molecule id="Q969X5-2"/>
    <property type="nucleotide sequence ID" value="XM_047417411.1"/>
</dbReference>
<dbReference type="RefSeq" id="XP_054208930.1">
    <molecule id="Q969X5-2"/>
    <property type="nucleotide sequence ID" value="XM_054352955.1"/>
</dbReference>
<dbReference type="SMR" id="Q969X5"/>
<dbReference type="BioGRID" id="121458">
    <property type="interactions" value="312"/>
</dbReference>
<dbReference type="FunCoup" id="Q969X5">
    <property type="interactions" value="2131"/>
</dbReference>
<dbReference type="IntAct" id="Q969X5">
    <property type="interactions" value="53"/>
</dbReference>
<dbReference type="MINT" id="Q969X5"/>
<dbReference type="STRING" id="9606.ENSP00000377374"/>
<dbReference type="GlyCosmos" id="Q969X5">
    <property type="glycosylation" value="2 sites, 1 glycan"/>
</dbReference>
<dbReference type="GlyGen" id="Q969X5">
    <property type="glycosylation" value="3 sites, 3 N-linked glycans (1 site), 2 O-linked glycans (2 sites)"/>
</dbReference>
<dbReference type="iPTMnet" id="Q969X5"/>
<dbReference type="PhosphoSitePlus" id="Q969X5"/>
<dbReference type="SwissPalm" id="Q969X5"/>
<dbReference type="BioMuta" id="ERGIC1"/>
<dbReference type="DMDM" id="51701446"/>
<dbReference type="jPOST" id="Q969X5"/>
<dbReference type="MassIVE" id="Q969X5"/>
<dbReference type="PaxDb" id="9606-ENSP00000377374"/>
<dbReference type="PeptideAtlas" id="Q969X5"/>
<dbReference type="ProteomicsDB" id="75870">
    <molecule id="Q969X5-1"/>
</dbReference>
<dbReference type="ProteomicsDB" id="75871">
    <molecule id="Q969X5-2"/>
</dbReference>
<dbReference type="ProteomicsDB" id="75872">
    <molecule id="Q969X5-3"/>
</dbReference>
<dbReference type="Pumba" id="Q969X5"/>
<dbReference type="TopDownProteomics" id="Q969X5-1">
    <molecule id="Q969X5-1"/>
</dbReference>
<dbReference type="Antibodypedia" id="17012">
    <property type="antibodies" value="75 antibodies from 18 providers"/>
</dbReference>
<dbReference type="DNASU" id="57222"/>
<dbReference type="Ensembl" id="ENST00000393784.8">
    <molecule id="Q969X5-1"/>
    <property type="protein sequence ID" value="ENSP00000377374.3"/>
    <property type="gene ID" value="ENSG00000113719.17"/>
</dbReference>
<dbReference type="Ensembl" id="ENST00000687901.1">
    <molecule id="Q969X5-2"/>
    <property type="protein sequence ID" value="ENSP00000509817.1"/>
    <property type="gene ID" value="ENSG00000113719.17"/>
</dbReference>
<dbReference type="Ensembl" id="ENST00000693299.1">
    <molecule id="Q969X5-2"/>
    <property type="protein sequence ID" value="ENSP00000509429.1"/>
    <property type="gene ID" value="ENSG00000113719.17"/>
</dbReference>
<dbReference type="GeneID" id="57222"/>
<dbReference type="KEGG" id="hsa:57222"/>
<dbReference type="MANE-Select" id="ENST00000393784.8">
    <property type="protein sequence ID" value="ENSP00000377374.3"/>
    <property type="RefSeq nucleotide sequence ID" value="NM_001031711.3"/>
    <property type="RefSeq protein sequence ID" value="NP_001026881.1"/>
</dbReference>
<dbReference type="UCSC" id="uc003mbw.5">
    <molecule id="Q969X5-1"/>
    <property type="organism name" value="human"/>
</dbReference>
<dbReference type="AGR" id="HGNC:29205"/>
<dbReference type="CTD" id="57222"/>
<dbReference type="DisGeNET" id="57222"/>
<dbReference type="GeneCards" id="ERGIC1"/>
<dbReference type="HGNC" id="HGNC:29205">
    <property type="gene designation" value="ERGIC1"/>
</dbReference>
<dbReference type="HPA" id="ENSG00000113719">
    <property type="expression patterns" value="Low tissue specificity"/>
</dbReference>
<dbReference type="MalaCards" id="ERGIC1"/>
<dbReference type="MIM" id="208100">
    <property type="type" value="phenotype"/>
</dbReference>
<dbReference type="MIM" id="617946">
    <property type="type" value="gene"/>
</dbReference>
<dbReference type="neXtProt" id="NX_Q969X5"/>
<dbReference type="OpenTargets" id="ENSG00000113719"/>
<dbReference type="Orphanet" id="1143">
    <property type="disease" value="Neurogenic arthrogryposis multiplex congenita"/>
</dbReference>
<dbReference type="PharmGKB" id="PA143485456"/>
<dbReference type="VEuPathDB" id="HostDB:ENSG00000113719"/>
<dbReference type="eggNOG" id="KOG2667">
    <property type="taxonomic scope" value="Eukaryota"/>
</dbReference>
<dbReference type="GeneTree" id="ENSGT00530000063113"/>
<dbReference type="HOGENOM" id="CLU_034705_0_1_1"/>
<dbReference type="InParanoid" id="Q969X5"/>
<dbReference type="OMA" id="IIPAVWF"/>
<dbReference type="OrthoDB" id="270930at2759"/>
<dbReference type="PAN-GO" id="Q969X5">
    <property type="GO annotations" value="7 GO annotations based on evolutionary models"/>
</dbReference>
<dbReference type="PhylomeDB" id="Q969X5"/>
<dbReference type="TreeFam" id="TF354253"/>
<dbReference type="PathwayCommons" id="Q969X5"/>
<dbReference type="SignaLink" id="Q969X5"/>
<dbReference type="SIGNOR" id="Q969X5"/>
<dbReference type="BioGRID-ORCS" id="57222">
    <property type="hits" value="11 hits in 1161 CRISPR screens"/>
</dbReference>
<dbReference type="ChiTaRS" id="ERGIC1">
    <property type="organism name" value="human"/>
</dbReference>
<dbReference type="GenomeRNAi" id="57222"/>
<dbReference type="Pharos" id="Q969X5">
    <property type="development level" value="Tbio"/>
</dbReference>
<dbReference type="PRO" id="PR:Q969X5"/>
<dbReference type="Proteomes" id="UP000005640">
    <property type="component" value="Chromosome 5"/>
</dbReference>
<dbReference type="RNAct" id="Q969X5">
    <property type="molecule type" value="protein"/>
</dbReference>
<dbReference type="Bgee" id="ENSG00000113719">
    <property type="expression patterns" value="Expressed in stromal cell of endometrium and 181 other cell types or tissues"/>
</dbReference>
<dbReference type="ExpressionAtlas" id="Q969X5">
    <property type="expression patterns" value="baseline and differential"/>
</dbReference>
<dbReference type="GO" id="GO:0030134">
    <property type="term" value="C:COPII-coated ER to Golgi transport vesicle"/>
    <property type="evidence" value="ECO:0000318"/>
    <property type="project" value="GO_Central"/>
</dbReference>
<dbReference type="GO" id="GO:0005783">
    <property type="term" value="C:endoplasmic reticulum"/>
    <property type="evidence" value="ECO:0000318"/>
    <property type="project" value="GO_Central"/>
</dbReference>
<dbReference type="GO" id="GO:0005789">
    <property type="term" value="C:endoplasmic reticulum membrane"/>
    <property type="evidence" value="ECO:0000318"/>
    <property type="project" value="GO_Central"/>
</dbReference>
<dbReference type="GO" id="GO:0005793">
    <property type="term" value="C:endoplasmic reticulum-Golgi intermediate compartment"/>
    <property type="evidence" value="ECO:0000314"/>
    <property type="project" value="HGNC-UCL"/>
</dbReference>
<dbReference type="GO" id="GO:0033116">
    <property type="term" value="C:endoplasmic reticulum-Golgi intermediate compartment membrane"/>
    <property type="evidence" value="ECO:0007669"/>
    <property type="project" value="UniProtKB-SubCell"/>
</dbReference>
<dbReference type="GO" id="GO:0000139">
    <property type="term" value="C:Golgi membrane"/>
    <property type="evidence" value="ECO:0000318"/>
    <property type="project" value="GO_Central"/>
</dbReference>
<dbReference type="GO" id="GO:0043231">
    <property type="term" value="C:intracellular membrane-bounded organelle"/>
    <property type="evidence" value="ECO:0000314"/>
    <property type="project" value="HPA"/>
</dbReference>
<dbReference type="GO" id="GO:0016020">
    <property type="term" value="C:membrane"/>
    <property type="evidence" value="ECO:0007005"/>
    <property type="project" value="UniProtKB"/>
</dbReference>
<dbReference type="GO" id="GO:0005654">
    <property type="term" value="C:nucleoplasm"/>
    <property type="evidence" value="ECO:0000314"/>
    <property type="project" value="HPA"/>
</dbReference>
<dbReference type="GO" id="GO:0006888">
    <property type="term" value="P:endoplasmic reticulum to Golgi vesicle-mediated transport"/>
    <property type="evidence" value="ECO:0000314"/>
    <property type="project" value="HGNC-UCL"/>
</dbReference>
<dbReference type="GO" id="GO:0006890">
    <property type="term" value="P:retrograde vesicle-mediated transport, Golgi to endoplasmic reticulum"/>
    <property type="evidence" value="ECO:0000318"/>
    <property type="project" value="GO_Central"/>
</dbReference>
<dbReference type="InterPro" id="IPR045888">
    <property type="entry name" value="Erv"/>
</dbReference>
<dbReference type="InterPro" id="IPR012936">
    <property type="entry name" value="Erv_C"/>
</dbReference>
<dbReference type="InterPro" id="IPR039542">
    <property type="entry name" value="Erv_N"/>
</dbReference>
<dbReference type="PANTHER" id="PTHR10984">
    <property type="entry name" value="ENDOPLASMIC RETICULUM-GOLGI INTERMEDIATE COMPARTMENT PROTEIN"/>
    <property type="match status" value="1"/>
</dbReference>
<dbReference type="PANTHER" id="PTHR10984:SF36">
    <property type="entry name" value="ENDOPLASMIC RETICULUM-GOLGI INTERMEDIATE COMPARTMENT PROTEIN 1"/>
    <property type="match status" value="1"/>
</dbReference>
<dbReference type="Pfam" id="PF07970">
    <property type="entry name" value="COPIIcoated_ERV"/>
    <property type="match status" value="1"/>
</dbReference>
<dbReference type="Pfam" id="PF13850">
    <property type="entry name" value="ERGIC_N"/>
    <property type="match status" value="1"/>
</dbReference>
<reference evidence="13" key="1">
    <citation type="journal article" date="1999" name="DNA Res.">
        <title>Characterization of cDNA clones selected by the GeneMark analysis from size-fractionated cDNA libraries from human brain.</title>
        <authorList>
            <person name="Hirosawa M."/>
            <person name="Nagase T."/>
            <person name="Ishikawa K."/>
            <person name="Kikuno R."/>
            <person name="Nomura N."/>
            <person name="Ohara O."/>
        </authorList>
    </citation>
    <scope>NUCLEOTIDE SEQUENCE [LARGE SCALE MRNA] (ISOFORM 1)</scope>
    <source>
        <tissue evidence="13">Brain</tissue>
    </source>
</reference>
<reference key="2">
    <citation type="journal article" date="2000" name="Proc. Natl. Acad. Sci. U.S.A.">
        <title>Gene expression profiling in the human hypothalamus-pituitary-adrenal axis and full-length cDNA cloning.</title>
        <authorList>
            <person name="Hu R.-M."/>
            <person name="Han Z.-G."/>
            <person name="Song H.-D."/>
            <person name="Peng Y.-D."/>
            <person name="Huang Q.-H."/>
            <person name="Ren S.-X."/>
            <person name="Gu Y.-J."/>
            <person name="Huang C.-H."/>
            <person name="Li Y.-B."/>
            <person name="Jiang C.-L."/>
            <person name="Fu G."/>
            <person name="Zhang Q.-H."/>
            <person name="Gu B.-W."/>
            <person name="Dai M."/>
            <person name="Mao Y.-F."/>
            <person name="Gao G.-F."/>
            <person name="Rong R."/>
            <person name="Ye M."/>
            <person name="Zhou J."/>
            <person name="Xu S.-H."/>
            <person name="Gu J."/>
            <person name="Shi J.-X."/>
            <person name="Jin W.-R."/>
            <person name="Zhang C.-K."/>
            <person name="Wu T.-M."/>
            <person name="Huang G.-Y."/>
            <person name="Chen Z."/>
            <person name="Chen M.-D."/>
            <person name="Chen J.-L."/>
        </authorList>
    </citation>
    <scope>NUCLEOTIDE SEQUENCE [LARGE SCALE MRNA] (ISOFORM 2)</scope>
    <source>
        <tissue>Hypothalamus</tissue>
    </source>
</reference>
<reference key="3">
    <citation type="journal article" date="2001" name="Genome Res.">
        <title>Towards a catalog of human genes and proteins: sequencing and analysis of 500 novel complete protein coding human cDNAs.</title>
        <authorList>
            <person name="Wiemann S."/>
            <person name="Weil B."/>
            <person name="Wellenreuther R."/>
            <person name="Gassenhuber J."/>
            <person name="Glassl S."/>
            <person name="Ansorge W."/>
            <person name="Boecher M."/>
            <person name="Bloecker H."/>
            <person name="Bauersachs S."/>
            <person name="Blum H."/>
            <person name="Lauber J."/>
            <person name="Duesterhoeft A."/>
            <person name="Beyer A."/>
            <person name="Koehrer K."/>
            <person name="Strack N."/>
            <person name="Mewes H.-W."/>
            <person name="Ottenwaelder B."/>
            <person name="Obermaier B."/>
            <person name="Tampe J."/>
            <person name="Heubner D."/>
            <person name="Wambutt R."/>
            <person name="Korn B."/>
            <person name="Klein M."/>
            <person name="Poustka A."/>
        </authorList>
    </citation>
    <scope>NUCLEOTIDE SEQUENCE [LARGE SCALE MRNA] (ISOFORM 3)</scope>
    <source>
        <tissue>Testis</tissue>
    </source>
</reference>
<reference key="4">
    <citation type="submission" date="2004-06" db="EMBL/GenBank/DDBJ databases">
        <title>Cloning of human full open reading frames in Gateway(TM) system entry vector (pDONR201).</title>
        <authorList>
            <person name="Ebert L."/>
            <person name="Schick M."/>
            <person name="Neubert P."/>
            <person name="Schatten R."/>
            <person name="Henze S."/>
            <person name="Korn B."/>
        </authorList>
    </citation>
    <scope>NUCLEOTIDE SEQUENCE [LARGE SCALE MRNA] (ISOFORM 3)</scope>
</reference>
<reference evidence="10 12" key="5">
    <citation type="journal article" date="2004" name="Genome Res.">
        <title>The status, quality, and expansion of the NIH full-length cDNA project: the Mammalian Gene Collection (MGC).</title>
        <authorList>
            <consortium name="The MGC Project Team"/>
        </authorList>
    </citation>
    <scope>NUCLEOTIDE SEQUENCE [LARGE SCALE MRNA] (ISOFORM 1)</scope>
    <source>
        <tissue evidence="11">Lymph</tissue>
        <tissue evidence="12">Pancreas</tissue>
    </source>
</reference>
<reference evidence="10" key="6">
    <citation type="journal article" date="2004" name="J. Biol. Chem.">
        <title>Proteomics of endoplasmic reticulum-Golgi intermediate compartment (ERGIC) membranes from brefeldin A-treated HepG2 cells identifies ERGIC-32, a new cycling protein that interacts with human Erv46.</title>
        <authorList>
            <person name="Breuza L."/>
            <person name="Halbeisen R."/>
            <person name="Jenoe P."/>
            <person name="Otte S."/>
            <person name="Barlowe C."/>
            <person name="Hong W."/>
            <person name="Hauri H.-P."/>
        </authorList>
    </citation>
    <scope>PROTEIN SEQUENCE OF 177-199 AND 233-241</scope>
    <scope>SUBCELLULAR LOCATION</scope>
    <scope>TOPOLOGY</scope>
    <scope>GLYCOSYLATION</scope>
    <scope>INTERACTION WITH ERGIC3</scope>
    <source>
        <tissue evidence="2">Hepatoma</tissue>
    </source>
</reference>
<reference key="7">
    <citation type="journal article" date="2009" name="J. Proteome Res.">
        <title>Glycoproteomics analysis of human liver tissue by combination of multiple enzyme digestion and hydrazide chemistry.</title>
        <authorList>
            <person name="Chen R."/>
            <person name="Jiang X."/>
            <person name="Sun D."/>
            <person name="Han G."/>
            <person name="Wang F."/>
            <person name="Ye M."/>
            <person name="Wang L."/>
            <person name="Zou H."/>
        </authorList>
    </citation>
    <scope>GLYCOSYLATION [LARGE SCALE ANALYSIS] AT ASN-74</scope>
    <source>
        <tissue>Liver</tissue>
    </source>
</reference>
<reference key="8">
    <citation type="journal article" date="2011" name="BMC Syst. Biol.">
        <title>Initial characterization of the human central proteome.</title>
        <authorList>
            <person name="Burkard T.R."/>
            <person name="Planyavsky M."/>
            <person name="Kaupe I."/>
            <person name="Breitwieser F.P."/>
            <person name="Buerckstuemmer T."/>
            <person name="Bennett K.L."/>
            <person name="Superti-Furga G."/>
            <person name="Colinge J."/>
        </authorList>
    </citation>
    <scope>IDENTIFICATION BY MASS SPECTROMETRY [LARGE SCALE ANALYSIS]</scope>
</reference>
<reference key="9">
    <citation type="journal article" date="2014" name="J. Proteomics">
        <title>An enzyme assisted RP-RPLC approach for in-depth analysis of human liver phosphoproteome.</title>
        <authorList>
            <person name="Bian Y."/>
            <person name="Song C."/>
            <person name="Cheng K."/>
            <person name="Dong M."/>
            <person name="Wang F."/>
            <person name="Huang J."/>
            <person name="Sun D."/>
            <person name="Wang L."/>
            <person name="Ye M."/>
            <person name="Zou H."/>
        </authorList>
    </citation>
    <scope>IDENTIFICATION BY MASS SPECTROMETRY [LARGE SCALE ANALYSIS]</scope>
    <source>
        <tissue>Liver</tissue>
    </source>
</reference>
<reference key="10">
    <citation type="journal article" date="2015" name="Proteomics">
        <title>N-terminome analysis of the human mitochondrial proteome.</title>
        <authorList>
            <person name="Vaca Jacome A.S."/>
            <person name="Rabilloud T."/>
            <person name="Schaeffer-Reiss C."/>
            <person name="Rompais M."/>
            <person name="Ayoub D."/>
            <person name="Lane L."/>
            <person name="Bairoch A."/>
            <person name="Van Dorsselaer A."/>
            <person name="Carapito C."/>
        </authorList>
    </citation>
    <scope>IDENTIFICATION BY MASS SPECTROMETRY [LARGE SCALE ANALYSIS]</scope>
</reference>
<reference key="11">
    <citation type="journal article" date="2019" name="J. Biol. Chem.">
        <title>The E3 ubiquitin ligase MARCH2 regulates ERGIC3-dependent trafficking of secretory proteins.</title>
        <authorList>
            <person name="Yoo W."/>
            <person name="Cho E.B."/>
            <person name="Kim S."/>
            <person name="Yoon J.B."/>
        </authorList>
    </citation>
    <scope>IDENTIFICATION IN A COMPLEX WITH ERGIC2 AND ERGIC3</scope>
    <scope>INTERACTION WITH ERGIC3</scope>
</reference>
<reference key="12">
    <citation type="journal article" date="2018" name="Clin. Genet.">
        <title>Mutations in ERGIC1 cause Arthrogryposis multiplex congenita, neuropathic type.</title>
        <authorList>
            <person name="Reinstein E."/>
            <person name="Drasinover V."/>
            <person name="Lotan R."/>
            <person name="Gal-Tanamy M."/>
            <person name="Bolocan Nachman I."/>
            <person name="Eyal E."/>
            <person name="Jaber L."/>
            <person name="Magal N."/>
            <person name="Shohat M."/>
        </authorList>
    </citation>
    <scope>INVOLVEMENT IN AMC2</scope>
    <scope>VARIANT AMC2 GLU-98</scope>
</reference>
<keyword id="KW-0025">Alternative splicing</keyword>
<keyword id="KW-0903">Direct protein sequencing</keyword>
<keyword id="KW-0225">Disease variant</keyword>
<keyword id="KW-0256">Endoplasmic reticulum</keyword>
<keyword id="KW-0931">ER-Golgi transport</keyword>
<keyword id="KW-0325">Glycoprotein</keyword>
<keyword id="KW-0333">Golgi apparatus</keyword>
<keyword id="KW-0472">Membrane</keyword>
<keyword id="KW-1267">Proteomics identification</keyword>
<keyword id="KW-1185">Reference proteome</keyword>
<keyword id="KW-0812">Transmembrane</keyword>
<keyword id="KW-1133">Transmembrane helix</keyword>
<keyword id="KW-0813">Transport</keyword>